<evidence type="ECO:0000250" key="1"/>
<evidence type="ECO:0000250" key="2">
    <source>
        <dbReference type="UniProtKB" id="O00444"/>
    </source>
</evidence>
<evidence type="ECO:0000255" key="3">
    <source>
        <dbReference type="PROSITE-ProRule" id="PRU00154"/>
    </source>
</evidence>
<evidence type="ECO:0000255" key="4">
    <source>
        <dbReference type="PROSITE-ProRule" id="PRU00159"/>
    </source>
</evidence>
<evidence type="ECO:0000255" key="5">
    <source>
        <dbReference type="PROSITE-ProRule" id="PRU01328"/>
    </source>
</evidence>
<evidence type="ECO:0000255" key="6">
    <source>
        <dbReference type="PROSITE-ProRule" id="PRU01329"/>
    </source>
</evidence>
<evidence type="ECO:0000256" key="7">
    <source>
        <dbReference type="SAM" id="MobiDB-lite"/>
    </source>
</evidence>
<evidence type="ECO:0000269" key="8">
    <source>
    </source>
</evidence>
<evidence type="ECO:0000269" key="9">
    <source>
    </source>
</evidence>
<evidence type="ECO:0000269" key="10">
    <source>
    </source>
</evidence>
<evidence type="ECO:0000269" key="11">
    <source>
    </source>
</evidence>
<evidence type="ECO:0000269" key="12">
    <source>
    </source>
</evidence>
<evidence type="ECO:0000269" key="13">
    <source>
    </source>
</evidence>
<evidence type="ECO:0000269" key="14">
    <source>
    </source>
</evidence>
<evidence type="ECO:0000303" key="15">
    <source>
    </source>
</evidence>
<evidence type="ECO:0000303" key="16">
    <source>
    </source>
</evidence>
<evidence type="ECO:0000305" key="17"/>
<evidence type="ECO:0000312" key="18">
    <source>
        <dbReference type="MGI" id="MGI:101783"/>
    </source>
</evidence>
<evidence type="ECO:0007829" key="19">
    <source>
        <dbReference type="PDB" id="1MBY"/>
    </source>
</evidence>
<reference key="1">
    <citation type="journal article" date="1994" name="Proc. Natl. Acad. Sci. U.S.A.">
        <title>Sak, a murine protein-serine/threonine kinase that is related to the Drosophila polo kinase and involved in cell proliferation.</title>
        <authorList>
            <person name="Fode C."/>
            <person name="Motro B."/>
            <person name="Yousefi S."/>
            <person name="Heffernan M."/>
            <person name="Dennis J.W."/>
        </authorList>
    </citation>
    <scope>NUCLEOTIDE SEQUENCE [MRNA] (ISOFORMS 1 AND 2)</scope>
    <scope>TISSUE SPECIFICITY</scope>
    <source>
        <strain>DBA/2J</strain>
        <tissue>Lymphoma</tissue>
    </source>
</reference>
<reference key="2">
    <citation type="journal article" date="2005" name="Science">
        <title>The transcriptional landscape of the mammalian genome.</title>
        <authorList>
            <person name="Carninci P."/>
            <person name="Kasukawa T."/>
            <person name="Katayama S."/>
            <person name="Gough J."/>
            <person name="Frith M.C."/>
            <person name="Maeda N."/>
            <person name="Oyama R."/>
            <person name="Ravasi T."/>
            <person name="Lenhard B."/>
            <person name="Wells C."/>
            <person name="Kodzius R."/>
            <person name="Shimokawa K."/>
            <person name="Bajic V.B."/>
            <person name="Brenner S.E."/>
            <person name="Batalov S."/>
            <person name="Forrest A.R."/>
            <person name="Zavolan M."/>
            <person name="Davis M.J."/>
            <person name="Wilming L.G."/>
            <person name="Aidinis V."/>
            <person name="Allen J.E."/>
            <person name="Ambesi-Impiombato A."/>
            <person name="Apweiler R."/>
            <person name="Aturaliya R.N."/>
            <person name="Bailey T.L."/>
            <person name="Bansal M."/>
            <person name="Baxter L."/>
            <person name="Beisel K.W."/>
            <person name="Bersano T."/>
            <person name="Bono H."/>
            <person name="Chalk A.M."/>
            <person name="Chiu K.P."/>
            <person name="Choudhary V."/>
            <person name="Christoffels A."/>
            <person name="Clutterbuck D.R."/>
            <person name="Crowe M.L."/>
            <person name="Dalla E."/>
            <person name="Dalrymple B.P."/>
            <person name="de Bono B."/>
            <person name="Della Gatta G."/>
            <person name="di Bernardo D."/>
            <person name="Down T."/>
            <person name="Engstrom P."/>
            <person name="Fagiolini M."/>
            <person name="Faulkner G."/>
            <person name="Fletcher C.F."/>
            <person name="Fukushima T."/>
            <person name="Furuno M."/>
            <person name="Futaki S."/>
            <person name="Gariboldi M."/>
            <person name="Georgii-Hemming P."/>
            <person name="Gingeras T.R."/>
            <person name="Gojobori T."/>
            <person name="Green R.E."/>
            <person name="Gustincich S."/>
            <person name="Harbers M."/>
            <person name="Hayashi Y."/>
            <person name="Hensch T.K."/>
            <person name="Hirokawa N."/>
            <person name="Hill D."/>
            <person name="Huminiecki L."/>
            <person name="Iacono M."/>
            <person name="Ikeo K."/>
            <person name="Iwama A."/>
            <person name="Ishikawa T."/>
            <person name="Jakt M."/>
            <person name="Kanapin A."/>
            <person name="Katoh M."/>
            <person name="Kawasawa Y."/>
            <person name="Kelso J."/>
            <person name="Kitamura H."/>
            <person name="Kitano H."/>
            <person name="Kollias G."/>
            <person name="Krishnan S.P."/>
            <person name="Kruger A."/>
            <person name="Kummerfeld S.K."/>
            <person name="Kurochkin I.V."/>
            <person name="Lareau L.F."/>
            <person name="Lazarevic D."/>
            <person name="Lipovich L."/>
            <person name="Liu J."/>
            <person name="Liuni S."/>
            <person name="McWilliam S."/>
            <person name="Madan Babu M."/>
            <person name="Madera M."/>
            <person name="Marchionni L."/>
            <person name="Matsuda H."/>
            <person name="Matsuzawa S."/>
            <person name="Miki H."/>
            <person name="Mignone F."/>
            <person name="Miyake S."/>
            <person name="Morris K."/>
            <person name="Mottagui-Tabar S."/>
            <person name="Mulder N."/>
            <person name="Nakano N."/>
            <person name="Nakauchi H."/>
            <person name="Ng P."/>
            <person name="Nilsson R."/>
            <person name="Nishiguchi S."/>
            <person name="Nishikawa S."/>
            <person name="Nori F."/>
            <person name="Ohara O."/>
            <person name="Okazaki Y."/>
            <person name="Orlando V."/>
            <person name="Pang K.C."/>
            <person name="Pavan W.J."/>
            <person name="Pavesi G."/>
            <person name="Pesole G."/>
            <person name="Petrovsky N."/>
            <person name="Piazza S."/>
            <person name="Reed J."/>
            <person name="Reid J.F."/>
            <person name="Ring B.Z."/>
            <person name="Ringwald M."/>
            <person name="Rost B."/>
            <person name="Ruan Y."/>
            <person name="Salzberg S.L."/>
            <person name="Sandelin A."/>
            <person name="Schneider C."/>
            <person name="Schoenbach C."/>
            <person name="Sekiguchi K."/>
            <person name="Semple C.A."/>
            <person name="Seno S."/>
            <person name="Sessa L."/>
            <person name="Sheng Y."/>
            <person name="Shibata Y."/>
            <person name="Shimada H."/>
            <person name="Shimada K."/>
            <person name="Silva D."/>
            <person name="Sinclair B."/>
            <person name="Sperling S."/>
            <person name="Stupka E."/>
            <person name="Sugiura K."/>
            <person name="Sultana R."/>
            <person name="Takenaka Y."/>
            <person name="Taki K."/>
            <person name="Tammoja K."/>
            <person name="Tan S.L."/>
            <person name="Tang S."/>
            <person name="Taylor M.S."/>
            <person name="Tegner J."/>
            <person name="Teichmann S.A."/>
            <person name="Ueda H.R."/>
            <person name="van Nimwegen E."/>
            <person name="Verardo R."/>
            <person name="Wei C.L."/>
            <person name="Yagi K."/>
            <person name="Yamanishi H."/>
            <person name="Zabarovsky E."/>
            <person name="Zhu S."/>
            <person name="Zimmer A."/>
            <person name="Hide W."/>
            <person name="Bult C."/>
            <person name="Grimmond S.M."/>
            <person name="Teasdale R.D."/>
            <person name="Liu E.T."/>
            <person name="Brusic V."/>
            <person name="Quackenbush J."/>
            <person name="Wahlestedt C."/>
            <person name="Mattick J.S."/>
            <person name="Hume D.A."/>
            <person name="Kai C."/>
            <person name="Sasaki D."/>
            <person name="Tomaru Y."/>
            <person name="Fukuda S."/>
            <person name="Kanamori-Katayama M."/>
            <person name="Suzuki M."/>
            <person name="Aoki J."/>
            <person name="Arakawa T."/>
            <person name="Iida J."/>
            <person name="Imamura K."/>
            <person name="Itoh M."/>
            <person name="Kato T."/>
            <person name="Kawaji H."/>
            <person name="Kawagashira N."/>
            <person name="Kawashima T."/>
            <person name="Kojima M."/>
            <person name="Kondo S."/>
            <person name="Konno H."/>
            <person name="Nakano K."/>
            <person name="Ninomiya N."/>
            <person name="Nishio T."/>
            <person name="Okada M."/>
            <person name="Plessy C."/>
            <person name="Shibata K."/>
            <person name="Shiraki T."/>
            <person name="Suzuki S."/>
            <person name="Tagami M."/>
            <person name="Waki K."/>
            <person name="Watahiki A."/>
            <person name="Okamura-Oho Y."/>
            <person name="Suzuki H."/>
            <person name="Kawai J."/>
            <person name="Hayashizaki Y."/>
        </authorList>
    </citation>
    <scope>NUCLEOTIDE SEQUENCE [LARGE SCALE MRNA] (ISOFORM 1)</scope>
    <source>
        <strain>C57BL/6J</strain>
        <tissue>Bone</tissue>
        <tissue>Embryo</tissue>
        <tissue>Testis</tissue>
    </source>
</reference>
<reference key="3">
    <citation type="submission" date="2005-07" db="EMBL/GenBank/DDBJ databases">
        <authorList>
            <person name="Mural R.J."/>
            <person name="Adams M.D."/>
            <person name="Myers E.W."/>
            <person name="Smith H.O."/>
            <person name="Venter J.C."/>
        </authorList>
    </citation>
    <scope>NUCLEOTIDE SEQUENCE [LARGE SCALE GENOMIC DNA]</scope>
</reference>
<reference key="4">
    <citation type="journal article" date="2004" name="Genome Res.">
        <title>The status, quality, and expansion of the NIH full-length cDNA project: the Mammalian Gene Collection (MGC).</title>
        <authorList>
            <consortium name="The MGC Project Team"/>
        </authorList>
    </citation>
    <scope>NUCLEOTIDE SEQUENCE [LARGE SCALE MRNA] (ISOFORMS 1 AND 3)</scope>
    <source>
        <strain>FVB/N</strain>
        <tissue>Mammary tumor</tissue>
    </source>
</reference>
<reference key="5">
    <citation type="journal article" date="1996" name="Mol. Cell. Biol.">
        <title>Constitutive expression of murine Sak-a suppresses cell growth and induces multinucleation.</title>
        <authorList>
            <person name="Fode C."/>
            <person name="Binkert C."/>
            <person name="Dennis J.W."/>
        </authorList>
    </citation>
    <scope>UBIQUITINATION</scope>
</reference>
<reference key="6">
    <citation type="journal article" date="2001" name="Curr. Biol.">
        <title>Late mitotic failure in mice lacking Sak, a polo-like kinase.</title>
        <authorList>
            <person name="Hudson J.W."/>
            <person name="Kozarova A."/>
            <person name="Cheung P."/>
            <person name="Macmillan J.C."/>
            <person name="Swallow C.J."/>
            <person name="Cross J.C."/>
            <person name="Dennis J.W."/>
        </authorList>
    </citation>
    <scope>SUBCELLULAR LOCATION</scope>
    <scope>DISRUPTION PHENOTYPE</scope>
</reference>
<reference key="7">
    <citation type="journal article" date="2005" name="Nat. Genet.">
        <title>Plk4 haploinsufficiency causes mitotic infidelity and carcinogenesis.</title>
        <authorList>
            <person name="Ko M.A."/>
            <person name="Rosario C.O."/>
            <person name="Hudson J.W."/>
            <person name="Kulkarni S."/>
            <person name="Pollett A."/>
            <person name="Dennis J.W."/>
            <person name="Swallow C.J."/>
        </authorList>
    </citation>
    <scope>DISRUPTION PHENOTYPE</scope>
</reference>
<reference key="8">
    <citation type="journal article" date="2007" name="Nat. Cell Biol.">
        <title>Nucleolar release of Hand1 acts as a molecular switch to determine cell fate.</title>
        <authorList>
            <person name="Martindill D.M.J."/>
            <person name="Risebro C.A."/>
            <person name="Smart N."/>
            <person name="Franco-Viseras Mdel M."/>
            <person name="Rosario C.O."/>
            <person name="Swallow C.J."/>
            <person name="Dennis J.W."/>
            <person name="Riley P.R."/>
        </authorList>
    </citation>
    <scope>FUNCTION</scope>
    <scope>SUBCELLULAR LOCATION</scope>
    <scope>MUTAGENESIS OF THR-170</scope>
</reference>
<reference key="9">
    <citation type="journal article" date="2013" name="Nat. Cell Biol.">
        <title>The Cep63 paralogue Deup1 enables massive de novo centriole biogenesis for vertebrate multiciliogenesis.</title>
        <authorList>
            <person name="Zhao H."/>
            <person name="Zhu L."/>
            <person name="Zhu Y."/>
            <person name="Cao J."/>
            <person name="Li S."/>
            <person name="Huang Q."/>
            <person name="Xu T."/>
            <person name="Huang X."/>
            <person name="Yan X."/>
            <person name="Zhu X."/>
        </authorList>
    </citation>
    <scope>FUNCTION</scope>
    <scope>SUBCELLULAR LOCATION</scope>
</reference>
<reference key="10">
    <citation type="journal article" date="2002" name="Nat. Struct. Biol.">
        <title>The Sak polo-box comprises a structural domain sufficient for mitotic subcellular localization.</title>
        <authorList>
            <person name="Leung G.C."/>
            <person name="Hudson J.W."/>
            <person name="Kozarova A."/>
            <person name="Davidson A."/>
            <person name="Dennis J.W."/>
            <person name="Sicheri F."/>
        </authorList>
    </citation>
    <scope>X-RAY CRYSTALLOGRAPHY (2.0 ANGSTROMS) OF 839-925</scope>
    <scope>SUBUNIT</scope>
    <scope>SUBCELLULAR LOCATION</scope>
</reference>
<proteinExistence type="evidence at protein level"/>
<organism>
    <name type="scientific">Mus musculus</name>
    <name type="common">Mouse</name>
    <dbReference type="NCBI Taxonomy" id="10090"/>
    <lineage>
        <taxon>Eukaryota</taxon>
        <taxon>Metazoa</taxon>
        <taxon>Chordata</taxon>
        <taxon>Craniata</taxon>
        <taxon>Vertebrata</taxon>
        <taxon>Euteleostomi</taxon>
        <taxon>Mammalia</taxon>
        <taxon>Eutheria</taxon>
        <taxon>Euarchontoglires</taxon>
        <taxon>Glires</taxon>
        <taxon>Rodentia</taxon>
        <taxon>Myomorpha</taxon>
        <taxon>Muroidea</taxon>
        <taxon>Muridae</taxon>
        <taxon>Murinae</taxon>
        <taxon>Mus</taxon>
        <taxon>Mus</taxon>
    </lineage>
</organism>
<feature type="chain" id="PRO_0000086568" description="Serine/threonine-protein kinase PLK4">
    <location>
        <begin position="1"/>
        <end position="925"/>
    </location>
</feature>
<feature type="domain" description="Protein kinase" evidence="4">
    <location>
        <begin position="12"/>
        <end position="265"/>
    </location>
</feature>
<feature type="domain" description="Cryptic POLO box 1 (CPB1)" evidence="5">
    <location>
        <begin position="547"/>
        <end position="660"/>
    </location>
</feature>
<feature type="domain" description="Cryptic POLO box 2 (CPB2)" evidence="6">
    <location>
        <begin position="661"/>
        <end position="774"/>
    </location>
</feature>
<feature type="domain" description="POLO box" evidence="3">
    <location>
        <begin position="841"/>
        <end position="919"/>
    </location>
</feature>
<feature type="region of interest" description="Disordered" evidence="7">
    <location>
        <begin position="262"/>
        <end position="283"/>
    </location>
</feature>
<feature type="region of interest" description="Disordered" evidence="7">
    <location>
        <begin position="328"/>
        <end position="394"/>
    </location>
</feature>
<feature type="region of interest" description="Disordered" evidence="7">
    <location>
        <begin position="517"/>
        <end position="538"/>
    </location>
</feature>
<feature type="compositionally biased region" description="Low complexity" evidence="7">
    <location>
        <begin position="330"/>
        <end position="341"/>
    </location>
</feature>
<feature type="compositionally biased region" description="Polar residues" evidence="7">
    <location>
        <begin position="342"/>
        <end position="353"/>
    </location>
</feature>
<feature type="compositionally biased region" description="Basic and acidic residues" evidence="7">
    <location>
        <begin position="359"/>
        <end position="369"/>
    </location>
</feature>
<feature type="compositionally biased region" description="Polar residues" evidence="7">
    <location>
        <begin position="381"/>
        <end position="391"/>
    </location>
</feature>
<feature type="compositionally biased region" description="Basic and acidic residues" evidence="7">
    <location>
        <begin position="525"/>
        <end position="536"/>
    </location>
</feature>
<feature type="active site" description="Proton acceptor" evidence="4">
    <location>
        <position position="136"/>
    </location>
</feature>
<feature type="binding site" evidence="4">
    <location>
        <begin position="18"/>
        <end position="26"/>
    </location>
    <ligand>
        <name>ATP</name>
        <dbReference type="ChEBI" id="CHEBI:30616"/>
    </ligand>
</feature>
<feature type="binding site" evidence="4">
    <location>
        <position position="41"/>
    </location>
    <ligand>
        <name>ATP</name>
        <dbReference type="ChEBI" id="CHEBI:30616"/>
    </ligand>
</feature>
<feature type="modified residue" description="N6-acetyllysine" evidence="2">
    <location>
        <position position="45"/>
    </location>
</feature>
<feature type="modified residue" description="N6-acetyllysine" evidence="2">
    <location>
        <position position="46"/>
    </location>
</feature>
<feature type="modified residue" description="Phosphoserine" evidence="2">
    <location>
        <position position="400"/>
    </location>
</feature>
<feature type="modified residue" description="Phosphoserine" evidence="2">
    <location>
        <position position="778"/>
    </location>
</feature>
<feature type="splice variant" id="VSP_011369" description="In isoform 2." evidence="16">
    <original>SSNHHCLGKTPFPFADQTPQMEMVQQWFGNLQMNAHLGETNEHHTVSP</original>
    <variation>RYSPTKSNVNVLTSLNTKQPIVKDLLKDRIMTEQYKDNLLNLLNKFDR</variation>
    <location>
        <begin position="417"/>
        <end position="464"/>
    </location>
</feature>
<feature type="splice variant" id="VSP_011370" description="In isoform 2." evidence="16">
    <location>
        <begin position="465"/>
        <end position="925"/>
    </location>
</feature>
<feature type="splice variant" id="VSP_011371" description="In isoform 3." evidence="15">
    <location>
        <begin position="580"/>
        <end position="606"/>
    </location>
</feature>
<feature type="mutagenesis site" description="Activating mutant." evidence="11">
    <original>T</original>
    <variation>D</variation>
    <location>
        <position position="170"/>
    </location>
</feature>
<feature type="sequence conflict" description="In Ref. 1; AAC37648/AAC37649." evidence="17" ref="1">
    <original>F</original>
    <variation>S</variation>
    <location>
        <position position="201"/>
    </location>
</feature>
<feature type="sequence conflict" description="In Ref. 2; BAB24759." evidence="17" ref="2">
    <original>D</original>
    <variation>E</variation>
    <location>
        <position position="284"/>
    </location>
</feature>
<feature type="sequence conflict" description="In Ref. 2; BAB24599." evidence="17" ref="2">
    <original>M</original>
    <variation>V</variation>
    <location>
        <position position="509"/>
    </location>
</feature>
<feature type="sequence conflict" description="In Ref. 3; AAH26785/AAH57940." evidence="17" ref="3">
    <original>G</original>
    <variation>D</variation>
    <location>
        <position position="524"/>
    </location>
</feature>
<feature type="sequence conflict" description="In Ref. 3; AAH26785." evidence="17" ref="3">
    <original>A</original>
    <variation>E</variation>
    <location>
        <position position="589"/>
    </location>
</feature>
<feature type="sequence conflict" description="In Ref. 3; AAH26785/AAH57940." evidence="17" ref="3">
    <original>D</original>
    <variation>N</variation>
    <location>
        <position position="629"/>
    </location>
</feature>
<feature type="strand" evidence="19">
    <location>
        <begin position="848"/>
        <end position="855"/>
    </location>
</feature>
<feature type="strand" evidence="19">
    <location>
        <begin position="857"/>
        <end position="866"/>
    </location>
</feature>
<feature type="strand" evidence="19">
    <location>
        <begin position="871"/>
        <end position="884"/>
    </location>
</feature>
<feature type="strand" evidence="19">
    <location>
        <begin position="890"/>
        <end position="894"/>
    </location>
</feature>
<feature type="helix" evidence="19">
    <location>
        <begin position="901"/>
        <end position="907"/>
    </location>
</feature>
<feature type="turn" evidence="19">
    <location>
        <begin position="908"/>
        <end position="910"/>
    </location>
</feature>
<feature type="strand" evidence="19">
    <location>
        <begin position="913"/>
        <end position="917"/>
    </location>
</feature>
<keyword id="KW-0002">3D-structure</keyword>
<keyword id="KW-0007">Acetylation</keyword>
<keyword id="KW-0025">Alternative splicing</keyword>
<keyword id="KW-0067">ATP-binding</keyword>
<keyword id="KW-0963">Cytoplasm</keyword>
<keyword id="KW-0206">Cytoskeleton</keyword>
<keyword id="KW-0418">Kinase</keyword>
<keyword id="KW-0547">Nucleotide-binding</keyword>
<keyword id="KW-0539">Nucleus</keyword>
<keyword id="KW-0597">Phosphoprotein</keyword>
<keyword id="KW-1185">Reference proteome</keyword>
<keyword id="KW-0723">Serine/threonine-protein kinase</keyword>
<keyword id="KW-0808">Transferase</keyword>
<keyword id="KW-0832">Ubl conjugation</keyword>
<accession>Q64702</accession>
<accession>Q3UVA3</accession>
<accession>Q6PEP6</accession>
<accession>Q78EG6</accession>
<accession>Q80UT6</accession>
<accession>Q8R0I5</accession>
<accession>Q9CVR6</accession>
<accession>Q9CVU6</accession>
<sequence>MAACIGERIEDFKVGNLLGKGSFAGVYRAESIHTGLEVAIKMIDKKAMYKAGMVQRVQNEVKIHCQLKHPSVLELYNYFEDNNYVYLVLEMCHNGEMNRYLKNRMKPFSEREARHFMHQIITGMLYLHSHGILHRDLTLSNILLTRNMNIKIADFGLATQLNMPHEKHYTLCGTPNYISPEIATRSAHGLESDIWSLGCMFYTLLIGRPPFDTDTVKNTLNKVVLADYEMPAFLSREAQDLIHQLLRRNPADRLSLSSVLDHPFMSRNPSPKSKDVGTVEDSMDSGHATLSTTITASSGTSLSGSLLDRRLLVGQPLPNKITVFQKNKNSSDFSSGDGSNFCTQWGNPEQEANSRGRGRVIEDAEERPHSRYLRRAHSSDRASPSNQSRAKTYSVERCHSVEMLSKPRRSLDENQHSSNHHCLGKTPFPFADQTPQMEMVQQWFGNLQMNAHLGETNEHHTVSPNRDFQDYPDLQDTLRNAWTDTRASKNADTSANVHAVKQLSAMKYMSAHHHKPEVMPQEPGLHPHSEQSKNRSMESTLGYQKPTLRSITSPLIAHRLKPIRQKTKKAVVSILDSEEVCVELLRECASEGYVKEVLQISSDGTMITVYYPNDGRGFPLADRPPLPTDNISRYSFDNLPEKYWRKYQYASRFIQLVRSKTPKITYFTRYAKCILMENSPGADFEVWFYDGAKIHKTENLIHIIEKTGISYNLKNENEVTSLKEEVKVYMDHANEGHRICLSLESVISEEEKRSRGSSFFPIIVGRKPGNTSSPKALSAPPVDPSCCKGEQASASRLSVNSAAFPTQSPGLSPSTVTVEGLGHTATATGTGVSSSLPKSAQLLKSVFVKNVGWATQLTSGAVWVQFNDGSQLVVQAGVSSISYTSPDGQTTRYGENEKLPEYIKQKLQCLSSILLMFSNPTPNFQ</sequence>
<comment type="function">
    <text evidence="2 11 12">Serine/threonine-protein kinase that plays a central role in centriole duplication. Able to trigger procentriole formation on the surface of the parental centriole cylinder, leading to the recruitment of centriole biogenesis proteins such as SASS6, CPAP, CCP110, CEP135 and gamma-tubulin. When overexpressed, it is able to induce centrosome amplification through the simultaneous generation of multiple procentrioles adjoining each parental centriole during S phase. Phosphorylates 'Ser-151' of FBXW5 during the G1/S transition, leading to inhibit FBXW5 ability to ubiquitinate SASS6. Its central role in centriole replication suggests a possible role in tumorigenesis, centrosome aberrations being frequently observed in tumors. Phosphorylates CDC25C and CHEK2. Also involved in deuterosome-mediated centriole amplification in multiciliated that can generate more than 100 centrioles. Also involved in trophoblast differentiation by phosphorylating HAND1, leading to disrupt the interaction between HAND1 and MDFIC and activate HAND1. Required for the recruitment of STIL to the centriole and for STIL-mediated centriole amplification (By similarity). Phosphorylates CEP131 at 'Ser-78' and PCM1 at 'Ser-372' which is essential for proper organization and integrity of centriolar satellites (By similarity).</text>
</comment>
<comment type="catalytic activity">
    <reaction evidence="2">
        <text>L-seryl-[protein] + ATP = O-phospho-L-seryl-[protein] + ADP + H(+)</text>
        <dbReference type="Rhea" id="RHEA:17989"/>
        <dbReference type="Rhea" id="RHEA-COMP:9863"/>
        <dbReference type="Rhea" id="RHEA-COMP:11604"/>
        <dbReference type="ChEBI" id="CHEBI:15378"/>
        <dbReference type="ChEBI" id="CHEBI:29999"/>
        <dbReference type="ChEBI" id="CHEBI:30616"/>
        <dbReference type="ChEBI" id="CHEBI:83421"/>
        <dbReference type="ChEBI" id="CHEBI:456216"/>
        <dbReference type="EC" id="2.7.11.21"/>
    </reaction>
</comment>
<comment type="catalytic activity">
    <reaction evidence="2">
        <text>L-threonyl-[protein] + ATP = O-phospho-L-threonyl-[protein] + ADP + H(+)</text>
        <dbReference type="Rhea" id="RHEA:46608"/>
        <dbReference type="Rhea" id="RHEA-COMP:11060"/>
        <dbReference type="Rhea" id="RHEA-COMP:11605"/>
        <dbReference type="ChEBI" id="CHEBI:15378"/>
        <dbReference type="ChEBI" id="CHEBI:30013"/>
        <dbReference type="ChEBI" id="CHEBI:30616"/>
        <dbReference type="ChEBI" id="CHEBI:61977"/>
        <dbReference type="ChEBI" id="CHEBI:456216"/>
        <dbReference type="EC" id="2.7.11.21"/>
    </reaction>
</comment>
<comment type="subunit">
    <text evidence="2 9">Homodimer (PubMed:12352953). Interacts with CEP152 (via N-terminus). Interacts with CEP78; this interaction may be important for proper PLK4 localization to the centriole and PLK4-induced overduplication of centrioles. Interacts with CEP131. Interacts simultaneously with TENT5C and CEP192. Interacts with TENT5C; this interaction leads to the TENT5C recruitment in the centrosome (By similarity). Interacts with CEP85; this interaction may be important in cell migration and centriole assembly (By similarity).</text>
</comment>
<comment type="interaction">
    <interactant intactId="EBI-2552433">
        <id>Q64702</id>
    </interactant>
    <interactant intactId="EBI-2552433">
        <id>Q64702</id>
        <label>Plk4</label>
    </interactant>
    <organismsDiffer>false</organismsDiffer>
    <experiments>4</experiments>
</comment>
<comment type="interaction">
    <interactant intactId="EBI-2552433">
        <id>Q64702</id>
    </interactant>
    <interactant intactId="EBI-767764">
        <id>Q8WWL7</id>
        <label>CCNB3</label>
    </interactant>
    <organismsDiffer>true</organismsDiffer>
    <experiments>4</experiments>
</comment>
<comment type="interaction">
    <interactant intactId="EBI-2552433">
        <id>Q64702</id>
    </interactant>
    <interactant intactId="EBI-7056012">
        <id>P02686-1</id>
        <label>MBP</label>
    </interactant>
    <organismsDiffer>true</organismsDiffer>
    <experiments>2</experiments>
</comment>
<comment type="interaction">
    <interactant intactId="EBI-2552433">
        <id>Q64702</id>
    </interactant>
    <interactant intactId="EBI-4478820">
        <id>P03772</id>
    </interactant>
    <organismsDiffer>true</organismsDiffer>
    <experiments>2</experiments>
</comment>
<comment type="subcellular location">
    <subcellularLocation>
        <location evidence="8">Cytoplasm</location>
        <location evidence="8">Cytoskeleton</location>
        <location evidence="8">Microtubule organizing center</location>
        <location evidence="8">Centrosome</location>
        <location evidence="8">Centriole</location>
    </subcellularLocation>
    <subcellularLocation>
        <location evidence="8">Nucleus</location>
        <location evidence="8">Nucleolus</location>
    </subcellularLocation>
    <subcellularLocation>
        <location evidence="8">Cleavage furrow</location>
    </subcellularLocation>
    <subcellularLocation>
        <location evidence="2">Cytoplasm</location>
        <location evidence="2">Cytoskeleton</location>
        <location evidence="2">Microtubule organizing center</location>
        <location evidence="2">Centrosome</location>
    </subcellularLocation>
    <text>Associates with centrioles throughout the cell cycle. According to PubMed:11301255, it localizes to the nucleolus during G2, to the centrosomes in G2/M, and to the cleavage furrow during cytokinesis. Component of the deuterosome, a structure that promotes de novo centriole amplification in multiciliated cells that can generate more than 100 centrioles.</text>
</comment>
<comment type="alternative products">
    <event type="alternative splicing"/>
    <isoform>
        <id>Q64702-1</id>
        <name>1</name>
        <name>Sak-a</name>
        <sequence type="displayed"/>
    </isoform>
    <isoform>
        <id>Q64702-2</id>
        <name>2</name>
        <name>Sak-b</name>
        <sequence type="described" ref="VSP_011369 VSP_011370"/>
    </isoform>
    <isoform>
        <id>Q64702-3</id>
        <name>3</name>
        <sequence type="described" ref="VSP_011371"/>
    </isoform>
</comment>
<comment type="tissue specificity">
    <text evidence="13">expressed in tissues associated with mitotic and meiotic cell division. Highly expressed in testis.</text>
</comment>
<comment type="domain">
    <text evidence="2">Cryptic POLO box 1 (CPB1) and Cryptic POLO box 2 (CPB2) domains can simultaneously bind to both TENT5C and CEP192.</text>
</comment>
<comment type="PTM">
    <text evidence="2 14">Ubiquitinated; leading to its degradation by the proteasome (PubMed:8756623). Deubiquitinated by USP54; leading to PLK4 stabilization (By similarity).</text>
</comment>
<comment type="PTM">
    <text evidence="1">Tyrosine-phosphorylated by TEC.</text>
</comment>
<comment type="PTM">
    <text evidence="2">Acetylation by KAT2A and KAT2B impairs kinase activity by shifting the kinase to an inactive conformation.</text>
</comment>
<comment type="disruption phenotype">
    <text evidence="8 10">Death during embryogenesis. Embryos arrest after gastrulation at E7.5, with a marked increase in mitotic and apoptotic cells. Heterozygous mice are viable but show increased liver and lung cancers in elderly mice. Defects in heterozygous mice are associated with progressive cell cycle delays, increased spindle irregularities and accelerated hepatocellular carcinogenesis, probably due to increased centrosomal amplification, multipolar spindle formation and aneuploidy. The incidence of spontaneous.</text>
</comment>
<comment type="similarity">
    <text evidence="4 5 6">Belongs to the protein kinase superfamily. Ser/Thr protein kinase family. CDC5/Polo subfamily.</text>
</comment>
<comment type="sequence caution" evidence="17">
    <conflict type="erroneous initiation">
        <sequence resource="EMBL-CDS" id="AAH51483"/>
    </conflict>
</comment>
<gene>
    <name evidence="18" type="primary">Plk4</name>
    <name type="synonym">Sak</name>
    <name type="synonym">Stk18</name>
</gene>
<dbReference type="EC" id="2.7.11.21" evidence="2"/>
<dbReference type="EMBL" id="L29479">
    <property type="protein sequence ID" value="AAC37648.1"/>
    <property type="molecule type" value="mRNA"/>
</dbReference>
<dbReference type="EMBL" id="L29480">
    <property type="protein sequence ID" value="AAC37649.1"/>
    <property type="molecule type" value="mRNA"/>
</dbReference>
<dbReference type="EMBL" id="AK006459">
    <property type="protein sequence ID" value="BAB24599.1"/>
    <property type="molecule type" value="mRNA"/>
</dbReference>
<dbReference type="EMBL" id="AK006827">
    <property type="protein sequence ID" value="BAB24759.1"/>
    <property type="molecule type" value="mRNA"/>
</dbReference>
<dbReference type="EMBL" id="AK137080">
    <property type="protein sequence ID" value="BAE23231.1"/>
    <property type="molecule type" value="mRNA"/>
</dbReference>
<dbReference type="EMBL" id="AK137471">
    <property type="protein sequence ID" value="BAE23367.1"/>
    <property type="molecule type" value="mRNA"/>
</dbReference>
<dbReference type="EMBL" id="CH466530">
    <property type="protein sequence ID" value="EDL35140.1"/>
    <property type="molecule type" value="Genomic_DNA"/>
</dbReference>
<dbReference type="EMBL" id="CH466530">
    <property type="protein sequence ID" value="EDL35142.1"/>
    <property type="molecule type" value="Genomic_DNA"/>
</dbReference>
<dbReference type="EMBL" id="BC026785">
    <property type="protein sequence ID" value="AAH26785.1"/>
    <property type="molecule type" value="mRNA"/>
</dbReference>
<dbReference type="EMBL" id="BC051483">
    <property type="protein sequence ID" value="AAH51483.1"/>
    <property type="status" value="ALT_INIT"/>
    <property type="molecule type" value="mRNA"/>
</dbReference>
<dbReference type="EMBL" id="BC057940">
    <property type="protein sequence ID" value="AAH57940.1"/>
    <property type="molecule type" value="mRNA"/>
</dbReference>
<dbReference type="CCDS" id="CCDS17328.1">
    <molecule id="Q64702-1"/>
</dbReference>
<dbReference type="CCDS" id="CCDS57210.1">
    <molecule id="Q64702-3"/>
</dbReference>
<dbReference type="PIR" id="A55748">
    <property type="entry name" value="A55748"/>
</dbReference>
<dbReference type="RefSeq" id="NP_035625.2">
    <molecule id="Q64702-1"/>
    <property type="nucleotide sequence ID" value="NM_011495.3"/>
</dbReference>
<dbReference type="RefSeq" id="NP_775261.2">
    <molecule id="Q64702-3"/>
    <property type="nucleotide sequence ID" value="NM_173169.3"/>
</dbReference>
<dbReference type="PDB" id="1MBY">
    <property type="method" value="X-ray"/>
    <property type="resolution" value="2.00 A"/>
    <property type="chains" value="A/B=839-925"/>
</dbReference>
<dbReference type="PDBsum" id="1MBY"/>
<dbReference type="BMRB" id="Q64702"/>
<dbReference type="SMR" id="Q64702"/>
<dbReference type="BioGRID" id="203545">
    <property type="interactions" value="17"/>
</dbReference>
<dbReference type="ComplexPortal" id="CPX-1160">
    <property type="entry name" value="CEP152-PLK4 complex"/>
</dbReference>
<dbReference type="ComplexPortal" id="CPX-1298">
    <property type="entry name" value="CEP192-PLK4 complex"/>
</dbReference>
<dbReference type="DIP" id="DIP-42244N"/>
<dbReference type="FunCoup" id="Q64702">
    <property type="interactions" value="1878"/>
</dbReference>
<dbReference type="IntAct" id="Q64702">
    <property type="interactions" value="8"/>
</dbReference>
<dbReference type="MINT" id="Q64702"/>
<dbReference type="STRING" id="10090.ENSMUSP00000026858"/>
<dbReference type="iPTMnet" id="Q64702"/>
<dbReference type="PhosphoSitePlus" id="Q64702"/>
<dbReference type="PaxDb" id="10090-ENSMUSP00000026858"/>
<dbReference type="ProteomicsDB" id="288252">
    <molecule id="Q64702-1"/>
</dbReference>
<dbReference type="ProteomicsDB" id="288253">
    <molecule id="Q64702-2"/>
</dbReference>
<dbReference type="ProteomicsDB" id="288254">
    <molecule id="Q64702-3"/>
</dbReference>
<dbReference type="Antibodypedia" id="26934">
    <property type="antibodies" value="233 antibodies from 34 providers"/>
</dbReference>
<dbReference type="DNASU" id="20873"/>
<dbReference type="Ensembl" id="ENSMUST00000026858.11">
    <molecule id="Q64702-1"/>
    <property type="protein sequence ID" value="ENSMUSP00000026858.6"/>
    <property type="gene ID" value="ENSMUSG00000025758.11"/>
</dbReference>
<dbReference type="Ensembl" id="ENSMUST00000203295.3">
    <molecule id="Q64702-3"/>
    <property type="protein sequence ID" value="ENSMUSP00000145277.2"/>
    <property type="gene ID" value="ENSMUSG00000025758.11"/>
</dbReference>
<dbReference type="GeneID" id="20873"/>
<dbReference type="KEGG" id="mmu:20873"/>
<dbReference type="UCSC" id="uc008pbm.1">
    <molecule id="Q64702-2"/>
    <property type="organism name" value="mouse"/>
</dbReference>
<dbReference type="UCSC" id="uc008pbo.1">
    <molecule id="Q64702-1"/>
    <property type="organism name" value="mouse"/>
</dbReference>
<dbReference type="UCSC" id="uc012cpc.1">
    <molecule id="Q64702-3"/>
    <property type="organism name" value="mouse"/>
</dbReference>
<dbReference type="AGR" id="MGI:101783"/>
<dbReference type="CTD" id="10733"/>
<dbReference type="MGI" id="MGI:101783">
    <property type="gene designation" value="Plk4"/>
</dbReference>
<dbReference type="VEuPathDB" id="HostDB:ENSMUSG00000025758"/>
<dbReference type="eggNOG" id="KOG0575">
    <property type="taxonomic scope" value="Eukaryota"/>
</dbReference>
<dbReference type="GeneTree" id="ENSGT00940000156316"/>
<dbReference type="HOGENOM" id="CLU_008726_1_0_1"/>
<dbReference type="InParanoid" id="Q64702"/>
<dbReference type="OMA" id="NIVERCH"/>
<dbReference type="OrthoDB" id="10004143at2759"/>
<dbReference type="PhylomeDB" id="Q64702"/>
<dbReference type="TreeFam" id="TF101090"/>
<dbReference type="BRENDA" id="2.7.11.21">
    <property type="organism ID" value="3474"/>
</dbReference>
<dbReference type="Reactome" id="R-MMU-2565942">
    <property type="pathway name" value="Regulation of PLK1 Activity at G2/M Transition"/>
</dbReference>
<dbReference type="Reactome" id="R-MMU-380259">
    <property type="pathway name" value="Loss of Nlp from mitotic centrosomes"/>
</dbReference>
<dbReference type="Reactome" id="R-MMU-380270">
    <property type="pathway name" value="Recruitment of mitotic centrosome proteins and complexes"/>
</dbReference>
<dbReference type="Reactome" id="R-MMU-380284">
    <property type="pathway name" value="Loss of proteins required for interphase microtubule organization from the centrosome"/>
</dbReference>
<dbReference type="Reactome" id="R-MMU-380320">
    <property type="pathway name" value="Recruitment of NuMA to mitotic centrosomes"/>
</dbReference>
<dbReference type="Reactome" id="R-MMU-5620912">
    <property type="pathway name" value="Anchoring of the basal body to the plasma membrane"/>
</dbReference>
<dbReference type="Reactome" id="R-MMU-8854518">
    <property type="pathway name" value="AURKA Activation by TPX2"/>
</dbReference>
<dbReference type="BioGRID-ORCS" id="20873">
    <property type="hits" value="14 hits in 35 CRISPR screens"/>
</dbReference>
<dbReference type="CD-CODE" id="01CA17F3">
    <property type="entry name" value="Centrosome"/>
</dbReference>
<dbReference type="EvolutionaryTrace" id="Q64702"/>
<dbReference type="PRO" id="PR:Q64702"/>
<dbReference type="Proteomes" id="UP000000589">
    <property type="component" value="Chromosome 3"/>
</dbReference>
<dbReference type="RNAct" id="Q64702">
    <property type="molecule type" value="protein"/>
</dbReference>
<dbReference type="Bgee" id="ENSMUSG00000025758">
    <property type="expression patterns" value="Expressed in animal zygote and 70 other cell types or tissues"/>
</dbReference>
<dbReference type="ExpressionAtlas" id="Q64702">
    <property type="expression patterns" value="baseline and differential"/>
</dbReference>
<dbReference type="GO" id="GO:0005814">
    <property type="term" value="C:centriole"/>
    <property type="evidence" value="ECO:0000250"/>
    <property type="project" value="UniProtKB"/>
</dbReference>
<dbReference type="GO" id="GO:0005813">
    <property type="term" value="C:centrosome"/>
    <property type="evidence" value="ECO:0000250"/>
    <property type="project" value="UniProtKB"/>
</dbReference>
<dbReference type="GO" id="GO:0032154">
    <property type="term" value="C:cleavage furrow"/>
    <property type="evidence" value="ECO:0007669"/>
    <property type="project" value="UniProtKB-SubCell"/>
</dbReference>
<dbReference type="GO" id="GO:0005829">
    <property type="term" value="C:cytosol"/>
    <property type="evidence" value="ECO:0007669"/>
    <property type="project" value="Ensembl"/>
</dbReference>
<dbReference type="GO" id="GO:0098536">
    <property type="term" value="C:deuterosome"/>
    <property type="evidence" value="ECO:0000314"/>
    <property type="project" value="UniProtKB"/>
</dbReference>
<dbReference type="GO" id="GO:0005730">
    <property type="term" value="C:nucleolus"/>
    <property type="evidence" value="ECO:0000314"/>
    <property type="project" value="UniProtKB"/>
</dbReference>
<dbReference type="GO" id="GO:0120098">
    <property type="term" value="C:procentriole"/>
    <property type="evidence" value="ECO:0000266"/>
    <property type="project" value="ComplexPortal"/>
</dbReference>
<dbReference type="GO" id="GO:0120099">
    <property type="term" value="C:procentriole replication complex"/>
    <property type="evidence" value="ECO:0000266"/>
    <property type="project" value="ComplexPortal"/>
</dbReference>
<dbReference type="GO" id="GO:0001741">
    <property type="term" value="C:XY body"/>
    <property type="evidence" value="ECO:0000314"/>
    <property type="project" value="MGI"/>
</dbReference>
<dbReference type="GO" id="GO:0005524">
    <property type="term" value="F:ATP binding"/>
    <property type="evidence" value="ECO:0007669"/>
    <property type="project" value="UniProtKB-KW"/>
</dbReference>
<dbReference type="GO" id="GO:0042802">
    <property type="term" value="F:identical protein binding"/>
    <property type="evidence" value="ECO:0000353"/>
    <property type="project" value="IntAct"/>
</dbReference>
<dbReference type="GO" id="GO:0106310">
    <property type="term" value="F:protein serine kinase activity"/>
    <property type="evidence" value="ECO:0007669"/>
    <property type="project" value="RHEA"/>
</dbReference>
<dbReference type="GO" id="GO:0004674">
    <property type="term" value="F:protein serine/threonine kinase activity"/>
    <property type="evidence" value="ECO:0000314"/>
    <property type="project" value="UniProtKB"/>
</dbReference>
<dbReference type="GO" id="GO:0007099">
    <property type="term" value="P:centriole replication"/>
    <property type="evidence" value="ECO:0000315"/>
    <property type="project" value="UniProtKB"/>
</dbReference>
<dbReference type="GO" id="GO:0060271">
    <property type="term" value="P:cilium assembly"/>
    <property type="evidence" value="ECO:0000250"/>
    <property type="project" value="UniProtKB"/>
</dbReference>
<dbReference type="GO" id="GO:0098535">
    <property type="term" value="P:de novo centriole assembly involved in multi-ciliated epithelial cell differentiation"/>
    <property type="evidence" value="ECO:0000315"/>
    <property type="project" value="UniProtKB"/>
</dbReference>
<dbReference type="GO" id="GO:0046601">
    <property type="term" value="P:positive regulation of centriole replication"/>
    <property type="evidence" value="ECO:0000250"/>
    <property type="project" value="UniProtKB"/>
</dbReference>
<dbReference type="GO" id="GO:0060707">
    <property type="term" value="P:trophoblast giant cell differentiation"/>
    <property type="evidence" value="ECO:0000315"/>
    <property type="project" value="UniProtKB"/>
</dbReference>
<dbReference type="CDD" id="cd13114">
    <property type="entry name" value="POLO_box_Plk4_1"/>
    <property type="match status" value="1"/>
</dbReference>
<dbReference type="CDD" id="cd13115">
    <property type="entry name" value="POLO_box_Plk4_2"/>
    <property type="match status" value="1"/>
</dbReference>
<dbReference type="CDD" id="cd13116">
    <property type="entry name" value="POLO_box_Plk4_3"/>
    <property type="match status" value="1"/>
</dbReference>
<dbReference type="CDD" id="cd14186">
    <property type="entry name" value="STKc_PLK4"/>
    <property type="match status" value="1"/>
</dbReference>
<dbReference type="FunFam" id="3.30.200.20:FF:000221">
    <property type="entry name" value="Putative serine/threonine-protein kinase PLK4"/>
    <property type="match status" value="1"/>
</dbReference>
<dbReference type="FunFam" id="1.10.510.10:FF:000576">
    <property type="entry name" value="Serine/threonine-protein kinase PLK4"/>
    <property type="match status" value="1"/>
</dbReference>
<dbReference type="FunFam" id="2.40.50.930:FF:000001">
    <property type="entry name" value="Serine/threonine-protein kinase PLK4"/>
    <property type="match status" value="1"/>
</dbReference>
<dbReference type="FunFam" id="3.30.1120.130:FF:000001">
    <property type="entry name" value="serine/threonine-protein kinase PLK4 isoform X1"/>
    <property type="match status" value="1"/>
</dbReference>
<dbReference type="FunFam" id="3.30.1120.120:FF:000001">
    <property type="entry name" value="serine/threonine-protein kinase PLK4 isoform X2"/>
    <property type="match status" value="1"/>
</dbReference>
<dbReference type="Gene3D" id="2.40.50.930">
    <property type="match status" value="1"/>
</dbReference>
<dbReference type="Gene3D" id="3.30.1120.120">
    <property type="match status" value="1"/>
</dbReference>
<dbReference type="Gene3D" id="3.30.1120.130">
    <property type="match status" value="1"/>
</dbReference>
<dbReference type="Gene3D" id="3.30.200.20">
    <property type="entry name" value="Phosphorylase Kinase, domain 1"/>
    <property type="match status" value="1"/>
</dbReference>
<dbReference type="Gene3D" id="1.10.510.10">
    <property type="entry name" value="Transferase(Phosphotransferase) domain 1"/>
    <property type="match status" value="1"/>
</dbReference>
<dbReference type="InterPro" id="IPR011009">
    <property type="entry name" value="Kinase-like_dom_sf"/>
</dbReference>
<dbReference type="InterPro" id="IPR047108">
    <property type="entry name" value="Plk4-like_POLO_box_2_sf"/>
</dbReference>
<dbReference type="InterPro" id="IPR000959">
    <property type="entry name" value="POLO_box_dom"/>
</dbReference>
<dbReference type="InterPro" id="IPR033699">
    <property type="entry name" value="POLO_box_Plk4_1"/>
</dbReference>
<dbReference type="InterPro" id="IPR033698">
    <property type="entry name" value="POLO_box_Plk4_2"/>
</dbReference>
<dbReference type="InterPro" id="IPR033696">
    <property type="entry name" value="POLO_box_Plk4_C"/>
</dbReference>
<dbReference type="InterPro" id="IPR000719">
    <property type="entry name" value="Prot_kinase_dom"/>
</dbReference>
<dbReference type="InterPro" id="IPR017441">
    <property type="entry name" value="Protein_kinase_ATP_BS"/>
</dbReference>
<dbReference type="InterPro" id="IPR046437">
    <property type="entry name" value="Ser_Thr-PK_POLO_box_1_sf"/>
</dbReference>
<dbReference type="InterPro" id="IPR008266">
    <property type="entry name" value="Tyr_kinase_AS"/>
</dbReference>
<dbReference type="PANTHER" id="PTHR24345">
    <property type="entry name" value="SERINE/THREONINE-PROTEIN KINASE PLK"/>
    <property type="match status" value="1"/>
</dbReference>
<dbReference type="PANTHER" id="PTHR24345:SF89">
    <property type="entry name" value="SERINE_THREONINE-PROTEIN KINASE PLK4"/>
    <property type="match status" value="1"/>
</dbReference>
<dbReference type="Pfam" id="PF00069">
    <property type="entry name" value="Pkinase"/>
    <property type="match status" value="1"/>
</dbReference>
<dbReference type="Pfam" id="PF18190">
    <property type="entry name" value="Plk4_PB1"/>
    <property type="match status" value="1"/>
</dbReference>
<dbReference type="Pfam" id="PF18409">
    <property type="entry name" value="Plk4_PB2"/>
    <property type="match status" value="1"/>
</dbReference>
<dbReference type="SUPFAM" id="SSF82615">
    <property type="entry name" value="Polo-box domain"/>
    <property type="match status" value="1"/>
</dbReference>
<dbReference type="SUPFAM" id="SSF56112">
    <property type="entry name" value="Protein kinase-like (PK-like)"/>
    <property type="match status" value="1"/>
</dbReference>
<dbReference type="PROSITE" id="PS51984">
    <property type="entry name" value="CPB1"/>
    <property type="match status" value="1"/>
</dbReference>
<dbReference type="PROSITE" id="PS51985">
    <property type="entry name" value="CPB2"/>
    <property type="match status" value="1"/>
</dbReference>
<dbReference type="PROSITE" id="PS50078">
    <property type="entry name" value="POLO_BOX"/>
    <property type="match status" value="1"/>
</dbReference>
<dbReference type="PROSITE" id="PS00107">
    <property type="entry name" value="PROTEIN_KINASE_ATP"/>
    <property type="match status" value="1"/>
</dbReference>
<dbReference type="PROSITE" id="PS50011">
    <property type="entry name" value="PROTEIN_KINASE_DOM"/>
    <property type="match status" value="1"/>
</dbReference>
<name>PLK4_MOUSE</name>
<protein>
    <recommendedName>
        <fullName evidence="17">Serine/threonine-protein kinase PLK4</fullName>
        <ecNumber evidence="2">2.7.11.21</ecNumber>
    </recommendedName>
    <alternativeName>
        <fullName>Polo-like kinase 4</fullName>
        <shortName>PLK-4</shortName>
    </alternativeName>
    <alternativeName>
        <fullName>Serine/threonine-protein kinase 18</fullName>
    </alternativeName>
    <alternativeName>
        <fullName>Serine/threonine-protein kinase Sak</fullName>
    </alternativeName>
</protein>